<name>RS9_MYCSJ</name>
<evidence type="ECO:0000255" key="1">
    <source>
        <dbReference type="HAMAP-Rule" id="MF_00532"/>
    </source>
</evidence>
<evidence type="ECO:0000256" key="2">
    <source>
        <dbReference type="SAM" id="MobiDB-lite"/>
    </source>
</evidence>
<evidence type="ECO:0000305" key="3"/>
<comment type="similarity">
    <text evidence="1">Belongs to the universal ribosomal protein uS9 family.</text>
</comment>
<gene>
    <name evidence="1" type="primary">rpsI</name>
    <name type="ordered locus">Mjls_1158</name>
</gene>
<protein>
    <recommendedName>
        <fullName evidence="1">Small ribosomal subunit protein uS9</fullName>
    </recommendedName>
    <alternativeName>
        <fullName evidence="3">30S ribosomal protein S9</fullName>
    </alternativeName>
</protein>
<reference key="1">
    <citation type="submission" date="2007-02" db="EMBL/GenBank/DDBJ databases">
        <title>Complete sequence of Mycobacterium sp. JLS.</title>
        <authorList>
            <consortium name="US DOE Joint Genome Institute"/>
            <person name="Copeland A."/>
            <person name="Lucas S."/>
            <person name="Lapidus A."/>
            <person name="Barry K."/>
            <person name="Detter J.C."/>
            <person name="Glavina del Rio T."/>
            <person name="Hammon N."/>
            <person name="Israni S."/>
            <person name="Dalin E."/>
            <person name="Tice H."/>
            <person name="Pitluck S."/>
            <person name="Chain P."/>
            <person name="Malfatti S."/>
            <person name="Shin M."/>
            <person name="Vergez L."/>
            <person name="Schmutz J."/>
            <person name="Larimer F."/>
            <person name="Land M."/>
            <person name="Hauser L."/>
            <person name="Kyrpides N."/>
            <person name="Mikhailova N."/>
            <person name="Miller C.D."/>
            <person name="Anderson A.J."/>
            <person name="Sims R.C."/>
            <person name="Richardson P."/>
        </authorList>
    </citation>
    <scope>NUCLEOTIDE SEQUENCE [LARGE SCALE GENOMIC DNA]</scope>
    <source>
        <strain>JLS</strain>
    </source>
</reference>
<proteinExistence type="inferred from homology"/>
<keyword id="KW-0687">Ribonucleoprotein</keyword>
<keyword id="KW-0689">Ribosomal protein</keyword>
<feature type="chain" id="PRO_1000051260" description="Small ribosomal subunit protein uS9">
    <location>
        <begin position="1"/>
        <end position="158"/>
    </location>
</feature>
<feature type="region of interest" description="Disordered" evidence="2">
    <location>
        <begin position="1"/>
        <end position="20"/>
    </location>
</feature>
<feature type="compositionally biased region" description="Low complexity" evidence="2">
    <location>
        <begin position="10"/>
        <end position="20"/>
    </location>
</feature>
<accession>A3PVN4</accession>
<sequence length="158" mass="17556">MTEAVETETVEPTTDEATAADVEPREPVYIDRPIQTVGRRKEAVVRVRLVPGTGKFNLDGRTLEAYFPNKVHQQLIKAPLVLVDRLESFDVYAHLDGGGPSGQAGALRLAIARALILVQPEDRPALKKAGFLTRDPRAIERKKYGLKKARKAPQYSKR</sequence>
<dbReference type="EMBL" id="CP000580">
    <property type="protein sequence ID" value="ABN96961.1"/>
    <property type="molecule type" value="Genomic_DNA"/>
</dbReference>
<dbReference type="SMR" id="A3PVN4"/>
<dbReference type="KEGG" id="mjl:Mjls_1158"/>
<dbReference type="HOGENOM" id="CLU_046483_2_0_11"/>
<dbReference type="BioCyc" id="MSP164757:G1G8C-1170-MONOMER"/>
<dbReference type="GO" id="GO:0005737">
    <property type="term" value="C:cytoplasm"/>
    <property type="evidence" value="ECO:0007669"/>
    <property type="project" value="UniProtKB-ARBA"/>
</dbReference>
<dbReference type="GO" id="GO:0015935">
    <property type="term" value="C:small ribosomal subunit"/>
    <property type="evidence" value="ECO:0007669"/>
    <property type="project" value="TreeGrafter"/>
</dbReference>
<dbReference type="GO" id="GO:0003723">
    <property type="term" value="F:RNA binding"/>
    <property type="evidence" value="ECO:0007669"/>
    <property type="project" value="TreeGrafter"/>
</dbReference>
<dbReference type="GO" id="GO:0003735">
    <property type="term" value="F:structural constituent of ribosome"/>
    <property type="evidence" value="ECO:0007669"/>
    <property type="project" value="InterPro"/>
</dbReference>
<dbReference type="GO" id="GO:0006412">
    <property type="term" value="P:translation"/>
    <property type="evidence" value="ECO:0007669"/>
    <property type="project" value="UniProtKB-UniRule"/>
</dbReference>
<dbReference type="FunFam" id="3.30.230.10:FF:000001">
    <property type="entry name" value="30S ribosomal protein S9"/>
    <property type="match status" value="1"/>
</dbReference>
<dbReference type="Gene3D" id="3.30.230.10">
    <property type="match status" value="1"/>
</dbReference>
<dbReference type="HAMAP" id="MF_00532_B">
    <property type="entry name" value="Ribosomal_uS9_B"/>
    <property type="match status" value="1"/>
</dbReference>
<dbReference type="InterPro" id="IPR020568">
    <property type="entry name" value="Ribosomal_Su5_D2-typ_SF"/>
</dbReference>
<dbReference type="InterPro" id="IPR000754">
    <property type="entry name" value="Ribosomal_uS9"/>
</dbReference>
<dbReference type="InterPro" id="IPR023035">
    <property type="entry name" value="Ribosomal_uS9_bac/plastid"/>
</dbReference>
<dbReference type="InterPro" id="IPR020574">
    <property type="entry name" value="Ribosomal_uS9_CS"/>
</dbReference>
<dbReference type="InterPro" id="IPR014721">
    <property type="entry name" value="Ribsml_uS5_D2-typ_fold_subgr"/>
</dbReference>
<dbReference type="NCBIfam" id="NF001099">
    <property type="entry name" value="PRK00132.1"/>
    <property type="match status" value="1"/>
</dbReference>
<dbReference type="PANTHER" id="PTHR21569">
    <property type="entry name" value="RIBOSOMAL PROTEIN S9"/>
    <property type="match status" value="1"/>
</dbReference>
<dbReference type="PANTHER" id="PTHR21569:SF1">
    <property type="entry name" value="SMALL RIBOSOMAL SUBUNIT PROTEIN US9M"/>
    <property type="match status" value="1"/>
</dbReference>
<dbReference type="Pfam" id="PF00380">
    <property type="entry name" value="Ribosomal_S9"/>
    <property type="match status" value="1"/>
</dbReference>
<dbReference type="SUPFAM" id="SSF54211">
    <property type="entry name" value="Ribosomal protein S5 domain 2-like"/>
    <property type="match status" value="1"/>
</dbReference>
<dbReference type="PROSITE" id="PS00360">
    <property type="entry name" value="RIBOSOMAL_S9"/>
    <property type="match status" value="1"/>
</dbReference>
<organism>
    <name type="scientific">Mycobacterium sp. (strain JLS)</name>
    <dbReference type="NCBI Taxonomy" id="164757"/>
    <lineage>
        <taxon>Bacteria</taxon>
        <taxon>Bacillati</taxon>
        <taxon>Actinomycetota</taxon>
        <taxon>Actinomycetes</taxon>
        <taxon>Mycobacteriales</taxon>
        <taxon>Mycobacteriaceae</taxon>
        <taxon>Mycobacterium</taxon>
    </lineage>
</organism>